<evidence type="ECO:0000255" key="1"/>
<evidence type="ECO:0000256" key="2">
    <source>
        <dbReference type="SAM" id="MobiDB-lite"/>
    </source>
</evidence>
<evidence type="ECO:0000269" key="3">
    <source>
    </source>
</evidence>
<evidence type="ECO:0000303" key="4">
    <source>
    </source>
</evidence>
<evidence type="ECO:0000305" key="5"/>
<evidence type="ECO:0000305" key="6">
    <source>
    </source>
</evidence>
<evidence type="ECO:0000312" key="7">
    <source>
        <dbReference type="EMBL" id="AAL00661.1"/>
    </source>
</evidence>
<evidence type="ECO:0000312" key="8">
    <source>
        <dbReference type="Proteomes" id="UP000000586"/>
    </source>
</evidence>
<protein>
    <recommendedName>
        <fullName evidence="6">Competence protein ComGG</fullName>
    </recommendedName>
    <alternativeName>
        <fullName evidence="4">Minor pilin ComGG</fullName>
    </alternativeName>
</protein>
<organism evidence="8">
    <name type="scientific">Streptococcus pneumoniae (strain ATCC BAA-255 / R6)</name>
    <dbReference type="NCBI Taxonomy" id="171101"/>
    <lineage>
        <taxon>Bacteria</taxon>
        <taxon>Bacillati</taxon>
        <taxon>Bacillota</taxon>
        <taxon>Bacilli</taxon>
        <taxon>Lactobacillales</taxon>
        <taxon>Streptococcaceae</taxon>
        <taxon>Streptococcus</taxon>
    </lineage>
</organism>
<keyword id="KW-1003">Cell membrane</keyword>
<keyword id="KW-0178">Competence</keyword>
<keyword id="KW-0281">Fimbrium</keyword>
<keyword id="KW-0472">Membrane</keyword>
<keyword id="KW-1185">Reference proteome</keyword>
<keyword id="KW-0812">Transmembrane</keyword>
<keyword id="KW-1133">Transmembrane helix</keyword>
<dbReference type="EMBL" id="AE007317">
    <property type="protein sequence ID" value="AAL00661.1"/>
    <property type="molecule type" value="Genomic_DNA"/>
</dbReference>
<dbReference type="PIR" id="F95239">
    <property type="entry name" value="F95239"/>
</dbReference>
<dbReference type="PIR" id="H98103">
    <property type="entry name" value="H98103"/>
</dbReference>
<dbReference type="RefSeq" id="NP_359450.1">
    <property type="nucleotide sequence ID" value="NC_003098.1"/>
</dbReference>
<dbReference type="RefSeq" id="WP_000265622.1">
    <property type="nucleotide sequence ID" value="NC_003098.1"/>
</dbReference>
<dbReference type="SMR" id="Q8CY84"/>
<dbReference type="STRING" id="171101.spr1858"/>
<dbReference type="KEGG" id="spr:spr1858"/>
<dbReference type="PATRIC" id="fig|171101.6.peg.2005"/>
<dbReference type="eggNOG" id="ENOG503046H">
    <property type="taxonomic scope" value="Bacteria"/>
</dbReference>
<dbReference type="HOGENOM" id="CLU_132131_3_0_9"/>
<dbReference type="Proteomes" id="UP000000586">
    <property type="component" value="Chromosome"/>
</dbReference>
<dbReference type="GO" id="GO:0009289">
    <property type="term" value="C:pilus"/>
    <property type="evidence" value="ECO:0007669"/>
    <property type="project" value="UniProtKB-SubCell"/>
</dbReference>
<dbReference type="GO" id="GO:0005886">
    <property type="term" value="C:plasma membrane"/>
    <property type="evidence" value="ECO:0007669"/>
    <property type="project" value="UniProtKB-SubCell"/>
</dbReference>
<dbReference type="GO" id="GO:0030420">
    <property type="term" value="P:establishment of competence for transformation"/>
    <property type="evidence" value="ECO:0007669"/>
    <property type="project" value="UniProtKB-KW"/>
</dbReference>
<dbReference type="InterPro" id="IPR047665">
    <property type="entry name" value="ComGG_streptococcus-type"/>
</dbReference>
<dbReference type="NCBIfam" id="NF041014">
    <property type="entry name" value="pilin_ComGG_2"/>
    <property type="match status" value="1"/>
</dbReference>
<sequence>MWKKKKVKAGVLLYAVTIAAIFSLLLQFYLNRQVAHYQDYALNKEKLVAFAMAKRTKDKVEQESGEQFFNLGQVSYQNKKTGLVTRVRTDKSQYEFLFPSVKIKEEKRDKKEEVATDSSEKVEKKKSEEKPEKKENS</sequence>
<comment type="function">
    <text evidence="3 5">Required for formation of the type IV-like pilus (T4P) that plays a role in transformation (PubMed:35004361). Transformation pili are dynamically extended and retracted, perhaps thereby promoting DNA uptake and transformation (Probable). Required for transformation (PubMed:35004361).</text>
</comment>
<comment type="subunit">
    <text evidence="3">The transformation pili are flexible filaments, consisting mainly of the major pilin ComGC and smaller amounts of the minor pilins, including at least ComGD, ComGF and ComGG, and perhaps ComGE (PubMed:35004361). Interacts with ComGC; the interaction is probably direct (PubMed:35004361). Interacts with ComGD (PubMed:35004361). Interacts with ComGE (PubMed:35004361). Interacts with ComGF (PubMed:35004361). May act as a link between ComGC, ComGD and ComGF (PubMed:35004361).</text>
</comment>
<comment type="subcellular location">
    <subcellularLocation>
        <location evidence="3">Fimbrium</location>
    </subcellularLocation>
    <subcellularLocation>
        <location evidence="1">Cell membrane</location>
        <topology evidence="1">Single-pass membrane protein</topology>
    </subcellularLocation>
</comment>
<comment type="disruption phenotype">
    <text evidence="3">Prevents transformation pilus formation and transformation (PubMed:35004361). Reduces level, but not processing, of ComGC (PubMed:35004361). Reduces level of ComGD and abolishes detection of ComGF (PubMed:35004361).</text>
</comment>
<name>COMGG_STRR6</name>
<accession>Q8CY84</accession>
<proteinExistence type="evidence at protein level"/>
<reference evidence="8" key="1">
    <citation type="journal article" date="2001" name="J. Bacteriol.">
        <title>Genome of the bacterium Streptococcus pneumoniae strain R6.</title>
        <authorList>
            <person name="Hoskins J."/>
            <person name="Alborn W.E. Jr."/>
            <person name="Arnold J."/>
            <person name="Blaszczak L.C."/>
            <person name="Burgett S."/>
            <person name="DeHoff B.S."/>
            <person name="Estrem S.T."/>
            <person name="Fritz L."/>
            <person name="Fu D.-J."/>
            <person name="Fuller W."/>
            <person name="Geringer C."/>
            <person name="Gilmour R."/>
            <person name="Glass J.S."/>
            <person name="Khoja H."/>
            <person name="Kraft A.R."/>
            <person name="Lagace R.E."/>
            <person name="LeBlanc D.J."/>
            <person name="Lee L.N."/>
            <person name="Lefkowitz E.J."/>
            <person name="Lu J."/>
            <person name="Matsushima P."/>
            <person name="McAhren S.M."/>
            <person name="McHenney M."/>
            <person name="McLeaster K."/>
            <person name="Mundy C.W."/>
            <person name="Nicas T.I."/>
            <person name="Norris F.H."/>
            <person name="O'Gara M."/>
            <person name="Peery R.B."/>
            <person name="Robertson G.T."/>
            <person name="Rockey P."/>
            <person name="Sun P.-M."/>
            <person name="Winkler M.E."/>
            <person name="Yang Y."/>
            <person name="Young-Bellido M."/>
            <person name="Zhao G."/>
            <person name="Zook C.A."/>
            <person name="Baltz R.H."/>
            <person name="Jaskunas S.R."/>
            <person name="Rosteck P.R. Jr."/>
            <person name="Skatrud P.L."/>
            <person name="Glass J.I."/>
        </authorList>
    </citation>
    <scope>NUCLEOTIDE SEQUENCE [LARGE SCALE GENOMIC DNA]</scope>
    <source>
        <strain evidence="8">ATCC BAA-255 / R6</strain>
    </source>
</reference>
<reference evidence="5" key="2">
    <citation type="journal article" date="2021" name="Front. Cell. Infect. Microbiol.">
        <title>The Role of Minor Pilins in Assembly and Function of the Competence Pilus of Streptococcus pneumoniae.</title>
        <authorList>
            <person name="Oliveira V."/>
            <person name="Aschtgen M.S."/>
            <person name="van Erp A."/>
            <person name="Henriques-Normark B."/>
            <person name="Muschiol S."/>
        </authorList>
    </citation>
    <scope>FUNCTION</scope>
    <scope>INTERACTION WITH COMGC; COMGD; COMGE AND COMGF</scope>
    <scope>SUBCELLULAR LOCATION</scope>
    <scope>DISRUPTION PHENOTYPE</scope>
</reference>
<gene>
    <name evidence="4" type="primary">comGG</name>
    <name evidence="7" type="ordered locus">spr1858</name>
</gene>
<feature type="chain" id="PRO_0000459513" description="Competence protein ComGG">
    <location>
        <begin position="1"/>
        <end position="137"/>
    </location>
</feature>
<feature type="transmembrane region" description="Helical" evidence="1">
    <location>
        <begin position="10"/>
        <end position="30"/>
    </location>
</feature>
<feature type="region of interest" description="Disordered" evidence="2">
    <location>
        <begin position="106"/>
        <end position="137"/>
    </location>
</feature>